<evidence type="ECO:0000250" key="1">
    <source>
        <dbReference type="UniProtKB" id="P76576"/>
    </source>
</evidence>
<evidence type="ECO:0000255" key="2"/>
<evidence type="ECO:0000305" key="3"/>
<accession>Q89A13</accession>
<sequence>MIKNSYINEKLNFYQKSFLTCMLLIVIVIVYFFSKNYLDKPKNSYVHTKMMTFLTNSNELNISKNLIWTKKTISGNLMSLKLAKVYVINNQLEKALKILEKSKNNSVDLNFFNLISFKIAQIYFQKNNIKKAITTIKDILGDSWDSIRNNFIGDVYFKLDNQKRAVTLWKRSIIQNKKIEFEKIIQMKINNYN</sequence>
<organism>
    <name type="scientific">Buchnera aphidicola subsp. Baizongia pistaciae (strain Bp)</name>
    <dbReference type="NCBI Taxonomy" id="224915"/>
    <lineage>
        <taxon>Bacteria</taxon>
        <taxon>Pseudomonadati</taxon>
        <taxon>Pseudomonadota</taxon>
        <taxon>Gammaproteobacteria</taxon>
        <taxon>Enterobacterales</taxon>
        <taxon>Erwiniaceae</taxon>
        <taxon>Buchnera</taxon>
    </lineage>
</organism>
<dbReference type="EMBL" id="AE016826">
    <property type="protein sequence ID" value="AAO27248.1"/>
    <property type="molecule type" value="Genomic_DNA"/>
</dbReference>
<dbReference type="RefSeq" id="WP_011091649.1">
    <property type="nucleotide sequence ID" value="NC_004545.1"/>
</dbReference>
<dbReference type="SMR" id="Q89A13"/>
<dbReference type="STRING" id="224915.bbp_550"/>
<dbReference type="KEGG" id="bab:bbp_550"/>
<dbReference type="eggNOG" id="COG2976">
    <property type="taxonomic scope" value="Bacteria"/>
</dbReference>
<dbReference type="HOGENOM" id="CLU_084785_0_1_6"/>
<dbReference type="Proteomes" id="UP000000601">
    <property type="component" value="Chromosome"/>
</dbReference>
<dbReference type="GO" id="GO:0005886">
    <property type="term" value="C:plasma membrane"/>
    <property type="evidence" value="ECO:0007669"/>
    <property type="project" value="UniProtKB-SubCell"/>
</dbReference>
<dbReference type="GO" id="GO:0044877">
    <property type="term" value="F:protein-containing complex binding"/>
    <property type="evidence" value="ECO:0007669"/>
    <property type="project" value="InterPro"/>
</dbReference>
<dbReference type="Gene3D" id="1.25.40.10">
    <property type="entry name" value="Tetratricopeptide repeat domain"/>
    <property type="match status" value="1"/>
</dbReference>
<dbReference type="InterPro" id="IPR018704">
    <property type="entry name" value="SecYEG/CpoB_TPR"/>
</dbReference>
<dbReference type="InterPro" id="IPR011990">
    <property type="entry name" value="TPR-like_helical_dom_sf"/>
</dbReference>
<dbReference type="InterPro" id="IPR026039">
    <property type="entry name" value="YfgM"/>
</dbReference>
<dbReference type="PANTHER" id="PTHR38035:SF1">
    <property type="entry name" value="ANCILLARY SECYEG TRANSLOCON SUBUNIT"/>
    <property type="match status" value="1"/>
</dbReference>
<dbReference type="PANTHER" id="PTHR38035">
    <property type="entry name" value="UPF0070 PROTEIN YFGM"/>
    <property type="match status" value="1"/>
</dbReference>
<dbReference type="Pfam" id="PF09976">
    <property type="entry name" value="TPR_21"/>
    <property type="match status" value="1"/>
</dbReference>
<dbReference type="SUPFAM" id="SSF48452">
    <property type="entry name" value="TPR-like"/>
    <property type="match status" value="1"/>
</dbReference>
<proteinExistence type="inferred from homology"/>
<keyword id="KW-1003">Cell membrane</keyword>
<keyword id="KW-0143">Chaperone</keyword>
<keyword id="KW-0472">Membrane</keyword>
<keyword id="KW-1185">Reference proteome</keyword>
<keyword id="KW-0812">Transmembrane</keyword>
<keyword id="KW-1133">Transmembrane helix</keyword>
<comment type="function">
    <text evidence="1">May mediate protein transfer from the Sec translocon to the chaperone network via its extracellular C-terminal region.</text>
</comment>
<comment type="subunit">
    <text evidence="1">Interacts with the Sec translocon (By similarity). Forms a complex with PpiD (By similarity).</text>
</comment>
<comment type="subcellular location">
    <subcellularLocation>
        <location evidence="1">Cell membrane</location>
        <topology evidence="1">Single-pass type II membrane protein</topology>
        <orientation evidence="1">Extracellular side</orientation>
    </subcellularLocation>
</comment>
<comment type="similarity">
    <text evidence="3">Belongs to the YfgM family.</text>
</comment>
<gene>
    <name type="ordered locus">bbp_550</name>
</gene>
<feature type="chain" id="PRO_0000214363" description="Ancillary SecYEG translocon subunit">
    <location>
        <begin position="1"/>
        <end position="193"/>
    </location>
</feature>
<feature type="topological domain" description="Cytoplasmic" evidence="1">
    <location>
        <begin position="1"/>
        <end position="11"/>
    </location>
</feature>
<feature type="transmembrane region" description="Helical" evidence="2">
    <location>
        <begin position="12"/>
        <end position="34"/>
    </location>
</feature>
<feature type="topological domain" description="Extracellular" evidence="1">
    <location>
        <begin position="35"/>
        <end position="193"/>
    </location>
</feature>
<name>YFGM_BUCBP</name>
<protein>
    <recommendedName>
        <fullName evidence="1">Ancillary SecYEG translocon subunit</fullName>
    </recommendedName>
    <alternativeName>
        <fullName evidence="1">Chaperone YfgM</fullName>
    </alternativeName>
</protein>
<reference key="1">
    <citation type="journal article" date="2003" name="Proc. Natl. Acad. Sci. U.S.A.">
        <title>Reductive genome evolution in Buchnera aphidicola.</title>
        <authorList>
            <person name="van Ham R.C.H.J."/>
            <person name="Kamerbeek J."/>
            <person name="Palacios C."/>
            <person name="Rausell C."/>
            <person name="Abascal F."/>
            <person name="Bastolla U."/>
            <person name="Fernandez J.M."/>
            <person name="Jimenez L."/>
            <person name="Postigo M."/>
            <person name="Silva F.J."/>
            <person name="Tamames J."/>
            <person name="Viguera E."/>
            <person name="Latorre A."/>
            <person name="Valencia A."/>
            <person name="Moran F."/>
            <person name="Moya A."/>
        </authorList>
    </citation>
    <scope>NUCLEOTIDE SEQUENCE [LARGE SCALE GENOMIC DNA]</scope>
    <source>
        <strain>Bp</strain>
    </source>
</reference>